<reference key="1">
    <citation type="journal article" date="2009" name="Genes Cells">
        <title>Identification and characterization of a novel Tre-2/Bub2/Cdc16 (TBC) protein that possesses Rab3A-GAP activity.</title>
        <authorList>
            <person name="Ishibashi K."/>
            <person name="Kanno E."/>
            <person name="Itoh T."/>
            <person name="Fukuda M."/>
        </authorList>
    </citation>
    <scope>NUCLEOTIDE SEQUENCE [MRNA] (ISOFORM 3)</scope>
    <scope>VARIANT PRO-99</scope>
    <source>
        <tissue>Brain</tissue>
    </source>
</reference>
<reference key="2">
    <citation type="journal article" date="2004" name="Nat. Genet.">
        <title>Complete sequencing and characterization of 21,243 full-length human cDNAs.</title>
        <authorList>
            <person name="Ota T."/>
            <person name="Suzuki Y."/>
            <person name="Nishikawa T."/>
            <person name="Otsuki T."/>
            <person name="Sugiyama T."/>
            <person name="Irie R."/>
            <person name="Wakamatsu A."/>
            <person name="Hayashi K."/>
            <person name="Sato H."/>
            <person name="Nagai K."/>
            <person name="Kimura K."/>
            <person name="Makita H."/>
            <person name="Sekine M."/>
            <person name="Obayashi M."/>
            <person name="Nishi T."/>
            <person name="Shibahara T."/>
            <person name="Tanaka T."/>
            <person name="Ishii S."/>
            <person name="Yamamoto J."/>
            <person name="Saito K."/>
            <person name="Kawai Y."/>
            <person name="Isono Y."/>
            <person name="Nakamura Y."/>
            <person name="Nagahari K."/>
            <person name="Murakami K."/>
            <person name="Yasuda T."/>
            <person name="Iwayanagi T."/>
            <person name="Wagatsuma M."/>
            <person name="Shiratori A."/>
            <person name="Sudo H."/>
            <person name="Hosoiri T."/>
            <person name="Kaku Y."/>
            <person name="Kodaira H."/>
            <person name="Kondo H."/>
            <person name="Sugawara M."/>
            <person name="Takahashi M."/>
            <person name="Kanda K."/>
            <person name="Yokoi T."/>
            <person name="Furuya T."/>
            <person name="Kikkawa E."/>
            <person name="Omura Y."/>
            <person name="Abe K."/>
            <person name="Kamihara K."/>
            <person name="Katsuta N."/>
            <person name="Sato K."/>
            <person name="Tanikawa M."/>
            <person name="Yamazaki M."/>
            <person name="Ninomiya K."/>
            <person name="Ishibashi T."/>
            <person name="Yamashita H."/>
            <person name="Murakawa K."/>
            <person name="Fujimori K."/>
            <person name="Tanai H."/>
            <person name="Kimata M."/>
            <person name="Watanabe M."/>
            <person name="Hiraoka S."/>
            <person name="Chiba Y."/>
            <person name="Ishida S."/>
            <person name="Ono Y."/>
            <person name="Takiguchi S."/>
            <person name="Watanabe S."/>
            <person name="Yosida M."/>
            <person name="Hotuta T."/>
            <person name="Kusano J."/>
            <person name="Kanehori K."/>
            <person name="Takahashi-Fujii A."/>
            <person name="Hara H."/>
            <person name="Tanase T.-O."/>
            <person name="Nomura Y."/>
            <person name="Togiya S."/>
            <person name="Komai F."/>
            <person name="Hara R."/>
            <person name="Takeuchi K."/>
            <person name="Arita M."/>
            <person name="Imose N."/>
            <person name="Musashino K."/>
            <person name="Yuuki H."/>
            <person name="Oshima A."/>
            <person name="Sasaki N."/>
            <person name="Aotsuka S."/>
            <person name="Yoshikawa Y."/>
            <person name="Matsunawa H."/>
            <person name="Ichihara T."/>
            <person name="Shiohata N."/>
            <person name="Sano S."/>
            <person name="Moriya S."/>
            <person name="Momiyama H."/>
            <person name="Satoh N."/>
            <person name="Takami S."/>
            <person name="Terashima Y."/>
            <person name="Suzuki O."/>
            <person name="Nakagawa S."/>
            <person name="Senoh A."/>
            <person name="Mizoguchi H."/>
            <person name="Goto Y."/>
            <person name="Shimizu F."/>
            <person name="Wakebe H."/>
            <person name="Hishigaki H."/>
            <person name="Watanabe T."/>
            <person name="Sugiyama A."/>
            <person name="Takemoto M."/>
            <person name="Kawakami B."/>
            <person name="Yamazaki M."/>
            <person name="Watanabe K."/>
            <person name="Kumagai A."/>
            <person name="Itakura S."/>
            <person name="Fukuzumi Y."/>
            <person name="Fujimori Y."/>
            <person name="Komiyama M."/>
            <person name="Tashiro H."/>
            <person name="Tanigami A."/>
            <person name="Fujiwara T."/>
            <person name="Ono T."/>
            <person name="Yamada K."/>
            <person name="Fujii Y."/>
            <person name="Ozaki K."/>
            <person name="Hirao M."/>
            <person name="Ohmori Y."/>
            <person name="Kawabata A."/>
            <person name="Hikiji T."/>
            <person name="Kobatake N."/>
            <person name="Inagaki H."/>
            <person name="Ikema Y."/>
            <person name="Okamoto S."/>
            <person name="Okitani R."/>
            <person name="Kawakami T."/>
            <person name="Noguchi S."/>
            <person name="Itoh T."/>
            <person name="Shigeta K."/>
            <person name="Senba T."/>
            <person name="Matsumura K."/>
            <person name="Nakajima Y."/>
            <person name="Mizuno T."/>
            <person name="Morinaga M."/>
            <person name="Sasaki M."/>
            <person name="Togashi T."/>
            <person name="Oyama M."/>
            <person name="Hata H."/>
            <person name="Watanabe M."/>
            <person name="Komatsu T."/>
            <person name="Mizushima-Sugano J."/>
            <person name="Satoh T."/>
            <person name="Shirai Y."/>
            <person name="Takahashi Y."/>
            <person name="Nakagawa K."/>
            <person name="Okumura K."/>
            <person name="Nagase T."/>
            <person name="Nomura N."/>
            <person name="Kikuchi H."/>
            <person name="Masuho Y."/>
            <person name="Yamashita R."/>
            <person name="Nakai K."/>
            <person name="Yada T."/>
            <person name="Nakamura Y."/>
            <person name="Ohara O."/>
            <person name="Isogai T."/>
            <person name="Sugano S."/>
        </authorList>
    </citation>
    <scope>NUCLEOTIDE SEQUENCE [LARGE SCALE MRNA] (ISOFORMS 1 AND 2)</scope>
    <scope>VARIANT PRO-99</scope>
    <source>
        <tissue>Mammary gland</tissue>
    </source>
</reference>
<reference key="3">
    <citation type="journal article" date="2004" name="Nature">
        <title>The DNA sequence and biology of human chromosome 19.</title>
        <authorList>
            <person name="Grimwood J."/>
            <person name="Gordon L.A."/>
            <person name="Olsen A.S."/>
            <person name="Terry A."/>
            <person name="Schmutz J."/>
            <person name="Lamerdin J.E."/>
            <person name="Hellsten U."/>
            <person name="Goodstein D."/>
            <person name="Couronne O."/>
            <person name="Tran-Gyamfi M."/>
            <person name="Aerts A."/>
            <person name="Altherr M."/>
            <person name="Ashworth L."/>
            <person name="Bajorek E."/>
            <person name="Black S."/>
            <person name="Branscomb E."/>
            <person name="Caenepeel S."/>
            <person name="Carrano A.V."/>
            <person name="Caoile C."/>
            <person name="Chan Y.M."/>
            <person name="Christensen M."/>
            <person name="Cleland C.A."/>
            <person name="Copeland A."/>
            <person name="Dalin E."/>
            <person name="Dehal P."/>
            <person name="Denys M."/>
            <person name="Detter J.C."/>
            <person name="Escobar J."/>
            <person name="Flowers D."/>
            <person name="Fotopulos D."/>
            <person name="Garcia C."/>
            <person name="Georgescu A.M."/>
            <person name="Glavina T."/>
            <person name="Gomez M."/>
            <person name="Gonzales E."/>
            <person name="Groza M."/>
            <person name="Hammon N."/>
            <person name="Hawkins T."/>
            <person name="Haydu L."/>
            <person name="Ho I."/>
            <person name="Huang W."/>
            <person name="Israni S."/>
            <person name="Jett J."/>
            <person name="Kadner K."/>
            <person name="Kimball H."/>
            <person name="Kobayashi A."/>
            <person name="Larionov V."/>
            <person name="Leem S.-H."/>
            <person name="Lopez F."/>
            <person name="Lou Y."/>
            <person name="Lowry S."/>
            <person name="Malfatti S."/>
            <person name="Martinez D."/>
            <person name="McCready P.M."/>
            <person name="Medina C."/>
            <person name="Morgan J."/>
            <person name="Nelson K."/>
            <person name="Nolan M."/>
            <person name="Ovcharenko I."/>
            <person name="Pitluck S."/>
            <person name="Pollard M."/>
            <person name="Popkie A.P."/>
            <person name="Predki P."/>
            <person name="Quan G."/>
            <person name="Ramirez L."/>
            <person name="Rash S."/>
            <person name="Retterer J."/>
            <person name="Rodriguez A."/>
            <person name="Rogers S."/>
            <person name="Salamov A."/>
            <person name="Salazar A."/>
            <person name="She X."/>
            <person name="Smith D."/>
            <person name="Slezak T."/>
            <person name="Solovyev V."/>
            <person name="Thayer N."/>
            <person name="Tice H."/>
            <person name="Tsai M."/>
            <person name="Ustaszewska A."/>
            <person name="Vo N."/>
            <person name="Wagner M."/>
            <person name="Wheeler J."/>
            <person name="Wu K."/>
            <person name="Xie G."/>
            <person name="Yang J."/>
            <person name="Dubchak I."/>
            <person name="Furey T.S."/>
            <person name="DeJong P."/>
            <person name="Dickson M."/>
            <person name="Gordon D."/>
            <person name="Eichler E.E."/>
            <person name="Pennacchio L.A."/>
            <person name="Richardson P."/>
            <person name="Stubbs L."/>
            <person name="Rokhsar D.S."/>
            <person name="Myers R.M."/>
            <person name="Rubin E.M."/>
            <person name="Lucas S.M."/>
        </authorList>
    </citation>
    <scope>NUCLEOTIDE SEQUENCE [LARGE SCALE GENOMIC DNA]</scope>
</reference>
<reference key="4">
    <citation type="journal article" date="2004" name="Genome Res.">
        <title>The status, quality, and expansion of the NIH full-length cDNA project: the Mammalian Gene Collection (MGC).</title>
        <authorList>
            <consortium name="The MGC Project Team"/>
        </authorList>
    </citation>
    <scope>NUCLEOTIDE SEQUENCE [LARGE SCALE MRNA] (ISOFORM 1)</scope>
    <scope>VARIANT PRO-99</scope>
    <source>
        <tissue>Skin</tissue>
    </source>
</reference>
<reference key="5">
    <citation type="journal article" date="2010" name="Sci. Signal.">
        <title>Quantitative phosphoproteomics reveals widespread full phosphorylation site occupancy during mitosis.</title>
        <authorList>
            <person name="Olsen J.V."/>
            <person name="Vermeulen M."/>
            <person name="Santamaria A."/>
            <person name="Kumar C."/>
            <person name="Miller M.L."/>
            <person name="Jensen L.J."/>
            <person name="Gnad F."/>
            <person name="Cox J."/>
            <person name="Jensen T.S."/>
            <person name="Nigg E.A."/>
            <person name="Brunak S."/>
            <person name="Mann M."/>
        </authorList>
    </citation>
    <scope>IDENTIFICATION BY MASS SPECTROMETRY [LARGE SCALE ANALYSIS]</scope>
    <source>
        <tissue>Cervix carcinoma</tissue>
    </source>
</reference>
<reference key="6">
    <citation type="journal article" date="2012" name="J. Cell Sci.">
        <title>Optineurin mediates a negative regulation of Rab8 by the GTPase-activating protein TBC1D17.</title>
        <authorList>
            <person name="Vaibhava V."/>
            <person name="Nagabhushana A."/>
            <person name="Chalasani M.L."/>
            <person name="Sudhakar C."/>
            <person name="Kumari A."/>
            <person name="Swarup G."/>
        </authorList>
    </citation>
    <scope>FUNCTION</scope>
    <scope>INTERACTION WITH OPTN</scope>
    <scope>SUBCELLULAR LOCATION</scope>
    <scope>MUTAGENESIS OF ARG-381</scope>
</reference>
<reference key="7">
    <citation type="journal article" date="2014" name="J. Proteomics">
        <title>An enzyme assisted RP-RPLC approach for in-depth analysis of human liver phosphoproteome.</title>
        <authorList>
            <person name="Bian Y."/>
            <person name="Song C."/>
            <person name="Cheng K."/>
            <person name="Dong M."/>
            <person name="Wang F."/>
            <person name="Huang J."/>
            <person name="Sun D."/>
            <person name="Wang L."/>
            <person name="Ye M."/>
            <person name="Zou H."/>
        </authorList>
    </citation>
    <scope>PHOSPHORYLATION [LARGE SCALE ANALYSIS] AT SER-602; SER-604; THR-606; SER-608 AND THR-615</scope>
    <scope>IDENTIFICATION BY MASS SPECTROMETRY [LARGE SCALE ANALYSIS]</scope>
    <source>
        <tissue>Liver</tissue>
    </source>
</reference>
<reference key="8">
    <citation type="journal article" date="2014" name="PLoS ONE">
        <title>E50K-OPTN-induced retinal cell death involves the Rab GTPase-activating protein, TBC1D17 mediated block in autophagy.</title>
        <authorList>
            <person name="Chalasani M.L."/>
            <person name="Kumari A."/>
            <person name="Radha V."/>
            <person name="Swarup G."/>
        </authorList>
    </citation>
    <scope>FUNCTION</scope>
    <scope>SUBCELLULAR LOCATION</scope>
    <scope>MUTAGENESIS OF ARG-381</scope>
</reference>
<gene>
    <name evidence="11" type="primary">TBC1D17</name>
</gene>
<accession>Q9HA65</accession>
<accession>B4DT12</accession>
<accession>B9A6L8</accession>
<accession>F5H1W7</accession>
<feature type="chain" id="PRO_0000208045" description="TBC1 domain family member 17">
    <location>
        <begin position="1"/>
        <end position="648"/>
    </location>
</feature>
<feature type="domain" description="Rab-GAP TBC" evidence="2">
    <location>
        <begin position="310"/>
        <end position="520"/>
    </location>
</feature>
<feature type="region of interest" description="Required for interaction with OPTN" evidence="7">
    <location>
        <begin position="218"/>
        <end position="309"/>
    </location>
</feature>
<feature type="region of interest" description="Disordered" evidence="3">
    <location>
        <begin position="240"/>
        <end position="259"/>
    </location>
</feature>
<feature type="region of interest" description="Disordered" evidence="3">
    <location>
        <begin position="594"/>
        <end position="648"/>
    </location>
</feature>
<feature type="compositionally biased region" description="Pro residues" evidence="3">
    <location>
        <begin position="597"/>
        <end position="624"/>
    </location>
</feature>
<feature type="compositionally biased region" description="Low complexity" evidence="3">
    <location>
        <begin position="625"/>
        <end position="634"/>
    </location>
</feature>
<feature type="compositionally biased region" description="Acidic residues" evidence="3">
    <location>
        <begin position="638"/>
        <end position="648"/>
    </location>
</feature>
<feature type="site" description="Arginine finger" evidence="1">
    <location>
        <position position="377"/>
    </location>
</feature>
<feature type="site" description="Glutamine finger" evidence="1">
    <location>
        <position position="418"/>
    </location>
</feature>
<feature type="modified residue" description="Phosphoserine" evidence="12">
    <location>
        <position position="602"/>
    </location>
</feature>
<feature type="modified residue" description="Phosphoserine" evidence="12">
    <location>
        <position position="604"/>
    </location>
</feature>
<feature type="modified residue" description="Phosphothreonine" evidence="12">
    <location>
        <position position="606"/>
    </location>
</feature>
<feature type="modified residue" description="Phosphoserine" evidence="12">
    <location>
        <position position="608"/>
    </location>
</feature>
<feature type="modified residue" description="Phosphothreonine" evidence="12">
    <location>
        <position position="615"/>
    </location>
</feature>
<feature type="splice variant" id="VSP_047344" description="In isoform 2." evidence="9">
    <location>
        <begin position="8"/>
        <end position="40"/>
    </location>
</feature>
<feature type="splice variant" id="VSP_053997" description="In isoform 3." evidence="10">
    <location>
        <begin position="584"/>
        <end position="637"/>
    </location>
</feature>
<feature type="sequence variant" id="VAR_060276" description="In dbSNP:rs8109661.">
    <original>G</original>
    <variation>D</variation>
    <location>
        <position position="84"/>
    </location>
</feature>
<feature type="sequence variant" id="VAR_024655" description="In dbSNP:rs3745486." evidence="4 5 6">
    <original>L</original>
    <variation>P</variation>
    <location>
        <position position="99"/>
    </location>
</feature>
<feature type="mutagenesis site" description="Strongly decreased inhibition of Rab8-mediated transferrin receptor (TfR) endocytic trafficking; enhanced Rab8 localization on ERC tubules and Rab8 interaction with TfR; impaired inhibitory effect on autophagy." evidence="7 8">
    <original>R</original>
    <variation>A</variation>
    <location>
        <position position="381"/>
    </location>
</feature>
<sequence length="648" mass="72670">MEGAGYRVVFEKGGVYLHTSAKKYQDRDSLIAGVIRVVEKDNDVLLHWAPVEEAGDSTQILFSKKDSSGGDSCASEEEPTFDPGYEPDWAVISTVRPQLCHSEPTRGAEPSCPQGSWAFSVSLGELKSIRRSKPGLSWAYLVLVTQAGGSLPALHFHRGGTRALLRVLSRYLLLASSPQDSRLYLVFPHDSSALSNSFHHLQLFDQDSSNVVSRFLQDPYSTTFSSFSRVTNFFRGALQPQPEGAASDLPPPPDDEPEPGFEVISCVELGPRPTVERGPPVTEEEWARHVGPEGRLQQVPELKNRIFSGGLSPSLRREAWKFLLGYLSWEGTAEEHKAHIRKKTDEYFRMKLQWKSVSPEQERRNSLLHGYRSLIERDVSRTDRTNKFYEGPENPGLGLLNDILLTYCMYHFDLGYVQGMSDLLSPILYVIQNEVDAFWCFCGFMELVQGNFEESQETMKRQLGRLLLLLRVLDPLLCDFLDSQDSGSLCFCFRWLLIWFKREFPFPDVLRLWEVLWTGLPGPNLHLLVACAILDMERDTLMLSGFGSNEILKHINELTMKLSVEDVLTRAEALHRQLTACPELPHNVQEILGLAPPAEPHSPSPTASPLPLSPTRAPPTPPPSTDTAPQPDSSLEILPEEEDEGADS</sequence>
<evidence type="ECO:0000250" key="1"/>
<evidence type="ECO:0000255" key="2">
    <source>
        <dbReference type="PROSITE-ProRule" id="PRU00163"/>
    </source>
</evidence>
<evidence type="ECO:0000256" key="3">
    <source>
        <dbReference type="SAM" id="MobiDB-lite"/>
    </source>
</evidence>
<evidence type="ECO:0000269" key="4">
    <source>
    </source>
</evidence>
<evidence type="ECO:0000269" key="5">
    <source>
    </source>
</evidence>
<evidence type="ECO:0000269" key="6">
    <source>
    </source>
</evidence>
<evidence type="ECO:0000269" key="7">
    <source>
    </source>
</evidence>
<evidence type="ECO:0000269" key="8">
    <source>
    </source>
</evidence>
<evidence type="ECO:0000303" key="9">
    <source>
    </source>
</evidence>
<evidence type="ECO:0000303" key="10">
    <source>
    </source>
</evidence>
<evidence type="ECO:0000312" key="11">
    <source>
        <dbReference type="HGNC" id="HGNC:25699"/>
    </source>
</evidence>
<evidence type="ECO:0007744" key="12">
    <source>
    </source>
</evidence>
<proteinExistence type="evidence at protein level"/>
<keyword id="KW-0025">Alternative splicing</keyword>
<keyword id="KW-0072">Autophagy</keyword>
<keyword id="KW-0963">Cytoplasm</keyword>
<keyword id="KW-0968">Cytoplasmic vesicle</keyword>
<keyword id="KW-0967">Endosome</keyword>
<keyword id="KW-0343">GTPase activation</keyword>
<keyword id="KW-0597">Phosphoprotein</keyword>
<keyword id="KW-0653">Protein transport</keyword>
<keyword id="KW-1267">Proteomics identification</keyword>
<keyword id="KW-1185">Reference proteome</keyword>
<keyword id="KW-0813">Transport</keyword>
<organism>
    <name type="scientific">Homo sapiens</name>
    <name type="common">Human</name>
    <dbReference type="NCBI Taxonomy" id="9606"/>
    <lineage>
        <taxon>Eukaryota</taxon>
        <taxon>Metazoa</taxon>
        <taxon>Chordata</taxon>
        <taxon>Craniata</taxon>
        <taxon>Vertebrata</taxon>
        <taxon>Euteleostomi</taxon>
        <taxon>Mammalia</taxon>
        <taxon>Eutheria</taxon>
        <taxon>Euarchontoglires</taxon>
        <taxon>Primates</taxon>
        <taxon>Haplorrhini</taxon>
        <taxon>Catarrhini</taxon>
        <taxon>Hominidae</taxon>
        <taxon>Homo</taxon>
    </lineage>
</organism>
<comment type="function">
    <text evidence="7 8">Probable RAB GTPase-activating protein that inhibits RAB8A/B function. Reduces Rab8 recruitment to tubules emanating from the endocytic recycling compartment (ERC) and inhibits Rab8-mediated endocytic trafficking, such as that of transferrin receptor (TfR) (PubMed:22854040). Involved in regulation of autophagy.</text>
</comment>
<comment type="subunit">
    <text evidence="7">Interacts with OPTN; this interaction mediates TBC1D17 transient association with Rab8.</text>
</comment>
<comment type="interaction">
    <interactant intactId="EBI-714625">
        <id>Q9HA65</id>
    </interactant>
    <interactant intactId="EBI-748974">
        <id>Q96CV9</id>
        <label>OPTN</label>
    </interactant>
    <organismsDiffer>false</organismsDiffer>
    <experiments>7</experiments>
</comment>
<comment type="subcellular location">
    <subcellularLocation>
        <location evidence="8">Cytoplasmic vesicle</location>
        <location evidence="8">Autophagosome</location>
    </subcellularLocation>
    <subcellularLocation>
        <location evidence="7">Cytoplasm</location>
    </subcellularLocation>
    <subcellularLocation>
        <location evidence="7">Recycling endosome</location>
    </subcellularLocation>
    <text evidence="7">In the presence of optineurin/OPTN, may be recruited to recycling endosomes.</text>
</comment>
<comment type="alternative products">
    <event type="alternative splicing"/>
    <isoform>
        <id>Q9HA65-1</id>
        <name>1</name>
        <sequence type="displayed"/>
    </isoform>
    <isoform>
        <id>Q9HA65-2</id>
        <name>2</name>
        <sequence type="described" ref="VSP_047344"/>
    </isoform>
    <isoform>
        <id>Q9HA65-3</id>
        <name>3</name>
        <sequence type="described" ref="VSP_053997"/>
    </isoform>
</comment>
<comment type="domain">
    <text evidence="1">The arginine and glutamine fingers are critical for the GTPase-activating mechanism, they pull out Rab's 'switch 2' glutamine and insert in Rab's active site.</text>
</comment>
<protein>
    <recommendedName>
        <fullName>TBC1 domain family member 17</fullName>
    </recommendedName>
</protein>
<name>TBC17_HUMAN</name>
<dbReference type="EMBL" id="AB449903">
    <property type="protein sequence ID" value="BAH16646.1"/>
    <property type="molecule type" value="mRNA"/>
</dbReference>
<dbReference type="EMBL" id="AK022230">
    <property type="protein sequence ID" value="BAB13991.1"/>
    <property type="molecule type" value="mRNA"/>
</dbReference>
<dbReference type="EMBL" id="AK300007">
    <property type="protein sequence ID" value="BAG61824.1"/>
    <property type="molecule type" value="mRNA"/>
</dbReference>
<dbReference type="EMBL" id="AC118341">
    <property type="status" value="NOT_ANNOTATED_CDS"/>
    <property type="molecule type" value="Genomic_DNA"/>
</dbReference>
<dbReference type="EMBL" id="AC118342">
    <property type="status" value="NOT_ANNOTATED_CDS"/>
    <property type="molecule type" value="Genomic_DNA"/>
</dbReference>
<dbReference type="EMBL" id="BC003516">
    <property type="protein sequence ID" value="AAH03516.1"/>
    <property type="molecule type" value="mRNA"/>
</dbReference>
<dbReference type="CCDS" id="CCDS12785.1">
    <molecule id="Q9HA65-1"/>
</dbReference>
<dbReference type="CCDS" id="CCDS54294.1">
    <molecule id="Q9HA65-2"/>
</dbReference>
<dbReference type="RefSeq" id="NP_001161694.1">
    <molecule id="Q9HA65-2"/>
    <property type="nucleotide sequence ID" value="NM_001168222.2"/>
</dbReference>
<dbReference type="RefSeq" id="NP_078958.2">
    <molecule id="Q9HA65-1"/>
    <property type="nucleotide sequence ID" value="NM_024682.3"/>
</dbReference>
<dbReference type="SMR" id="Q9HA65"/>
<dbReference type="BioGRID" id="122849">
    <property type="interactions" value="50"/>
</dbReference>
<dbReference type="FunCoup" id="Q9HA65">
    <property type="interactions" value="1383"/>
</dbReference>
<dbReference type="IntAct" id="Q9HA65">
    <property type="interactions" value="37"/>
</dbReference>
<dbReference type="MINT" id="Q9HA65"/>
<dbReference type="STRING" id="9606.ENSP00000221543"/>
<dbReference type="GlyGen" id="Q9HA65">
    <property type="glycosylation" value="2 sites"/>
</dbReference>
<dbReference type="iPTMnet" id="Q9HA65"/>
<dbReference type="PhosphoSitePlus" id="Q9HA65"/>
<dbReference type="BioMuta" id="TBC1D17"/>
<dbReference type="DMDM" id="296452920"/>
<dbReference type="jPOST" id="Q9HA65"/>
<dbReference type="MassIVE" id="Q9HA65"/>
<dbReference type="PaxDb" id="9606-ENSP00000221543"/>
<dbReference type="PeptideAtlas" id="Q9HA65"/>
<dbReference type="ProteomicsDB" id="25785"/>
<dbReference type="ProteomicsDB" id="81379">
    <molecule id="Q9HA65-1"/>
</dbReference>
<dbReference type="Pumba" id="Q9HA65"/>
<dbReference type="Antibodypedia" id="62898">
    <property type="antibodies" value="22 antibodies from 11 providers"/>
</dbReference>
<dbReference type="DNASU" id="79735"/>
<dbReference type="Ensembl" id="ENST00000221543.10">
    <molecule id="Q9HA65-1"/>
    <property type="protein sequence ID" value="ENSP00000221543.4"/>
    <property type="gene ID" value="ENSG00000104946.14"/>
</dbReference>
<dbReference type="Ensembl" id="ENST00000535102.6">
    <molecule id="Q9HA65-2"/>
    <property type="protein sequence ID" value="ENSP00000446323.1"/>
    <property type="gene ID" value="ENSG00000104946.14"/>
</dbReference>
<dbReference type="GeneID" id="79735"/>
<dbReference type="KEGG" id="hsa:79735"/>
<dbReference type="MANE-Select" id="ENST00000221543.10">
    <property type="protein sequence ID" value="ENSP00000221543.4"/>
    <property type="RefSeq nucleotide sequence ID" value="NM_024682.3"/>
    <property type="RefSeq protein sequence ID" value="NP_078958.2"/>
</dbReference>
<dbReference type="UCSC" id="uc002pqo.4">
    <molecule id="Q9HA65-1"/>
    <property type="organism name" value="human"/>
</dbReference>
<dbReference type="AGR" id="HGNC:25699"/>
<dbReference type="CTD" id="79735"/>
<dbReference type="DisGeNET" id="79735"/>
<dbReference type="GeneCards" id="TBC1D17"/>
<dbReference type="HGNC" id="HGNC:25699">
    <property type="gene designation" value="TBC1D17"/>
</dbReference>
<dbReference type="HPA" id="ENSG00000104946">
    <property type="expression patterns" value="Tissue enhanced (skeletal)"/>
</dbReference>
<dbReference type="MIM" id="616659">
    <property type="type" value="gene"/>
</dbReference>
<dbReference type="neXtProt" id="NX_Q9HA65"/>
<dbReference type="OpenTargets" id="ENSG00000104946"/>
<dbReference type="PharmGKB" id="PA134922509"/>
<dbReference type="VEuPathDB" id="HostDB:ENSG00000104946"/>
<dbReference type="eggNOG" id="KOG2197">
    <property type="taxonomic scope" value="Eukaryota"/>
</dbReference>
<dbReference type="GeneTree" id="ENSGT00940000158989"/>
<dbReference type="HOGENOM" id="CLU_004457_2_2_1"/>
<dbReference type="InParanoid" id="Q9HA65"/>
<dbReference type="OMA" id="CFAILME"/>
<dbReference type="OrthoDB" id="10264062at2759"/>
<dbReference type="PAN-GO" id="Q9HA65">
    <property type="GO annotations" value="2 GO annotations based on evolutionary models"/>
</dbReference>
<dbReference type="PhylomeDB" id="Q9HA65"/>
<dbReference type="TreeFam" id="TF314296"/>
<dbReference type="PathwayCommons" id="Q9HA65"/>
<dbReference type="Reactome" id="R-HSA-8854214">
    <property type="pathway name" value="TBC/RABGAPs"/>
</dbReference>
<dbReference type="SignaLink" id="Q9HA65"/>
<dbReference type="BioGRID-ORCS" id="79735">
    <property type="hits" value="20 hits in 1153 CRISPR screens"/>
</dbReference>
<dbReference type="CD-CODE" id="FB4E32DD">
    <property type="entry name" value="Presynaptic clusters and postsynaptic densities"/>
</dbReference>
<dbReference type="ChiTaRS" id="TBC1D17">
    <property type="organism name" value="human"/>
</dbReference>
<dbReference type="GenomeRNAi" id="79735"/>
<dbReference type="Pharos" id="Q9HA65">
    <property type="development level" value="Tdark"/>
</dbReference>
<dbReference type="PRO" id="PR:Q9HA65"/>
<dbReference type="Proteomes" id="UP000005640">
    <property type="component" value="Chromosome 19"/>
</dbReference>
<dbReference type="RNAct" id="Q9HA65">
    <property type="molecule type" value="protein"/>
</dbReference>
<dbReference type="Bgee" id="ENSG00000104946">
    <property type="expression patterns" value="Expressed in gastrocnemius and 99 other cell types or tissues"/>
</dbReference>
<dbReference type="ExpressionAtlas" id="Q9HA65">
    <property type="expression patterns" value="baseline and differential"/>
</dbReference>
<dbReference type="GO" id="GO:0005776">
    <property type="term" value="C:autophagosome"/>
    <property type="evidence" value="ECO:0007669"/>
    <property type="project" value="UniProtKB-SubCell"/>
</dbReference>
<dbReference type="GO" id="GO:0005829">
    <property type="term" value="C:cytosol"/>
    <property type="evidence" value="ECO:0000314"/>
    <property type="project" value="UniProtKB"/>
</dbReference>
<dbReference type="GO" id="GO:0055037">
    <property type="term" value="C:recycling endosome"/>
    <property type="evidence" value="ECO:0000304"/>
    <property type="project" value="Reactome"/>
</dbReference>
<dbReference type="GO" id="GO:0005096">
    <property type="term" value="F:GTPase activator activity"/>
    <property type="evidence" value="ECO:0000318"/>
    <property type="project" value="GO_Central"/>
</dbReference>
<dbReference type="GO" id="GO:0006914">
    <property type="term" value="P:autophagy"/>
    <property type="evidence" value="ECO:0007669"/>
    <property type="project" value="UniProtKB-KW"/>
</dbReference>
<dbReference type="GO" id="GO:0015031">
    <property type="term" value="P:protein transport"/>
    <property type="evidence" value="ECO:0007669"/>
    <property type="project" value="UniProtKB-KW"/>
</dbReference>
<dbReference type="GO" id="GO:0042147">
    <property type="term" value="P:retrograde transport, endosome to Golgi"/>
    <property type="evidence" value="ECO:0000315"/>
    <property type="project" value="UniProtKB"/>
</dbReference>
<dbReference type="FunFam" id="1.10.8.270:FF:000005">
    <property type="entry name" value="TBC1 domain family member 15"/>
    <property type="match status" value="1"/>
</dbReference>
<dbReference type="FunFam" id="1.10.472.80:FF:000036">
    <property type="entry name" value="TBC1 domain family member 17"/>
    <property type="match status" value="1"/>
</dbReference>
<dbReference type="Gene3D" id="1.10.8.270">
    <property type="entry name" value="putative rabgap domain of human tbc1 domain family member 14 like domains"/>
    <property type="match status" value="1"/>
</dbReference>
<dbReference type="Gene3D" id="1.10.472.80">
    <property type="entry name" value="Ypt/Rab-GAP domain of gyp1p, domain 3"/>
    <property type="match status" value="1"/>
</dbReference>
<dbReference type="InterPro" id="IPR000195">
    <property type="entry name" value="Rab-GAP-TBC_dom"/>
</dbReference>
<dbReference type="InterPro" id="IPR035969">
    <property type="entry name" value="Rab-GAP_TBC_sf"/>
</dbReference>
<dbReference type="InterPro" id="IPR021935">
    <property type="entry name" value="SGSM1/2_RBD"/>
</dbReference>
<dbReference type="PANTHER" id="PTHR22957:SF360">
    <property type="entry name" value="TBC1 DOMAIN FAMILY MEMBER 17"/>
    <property type="match status" value="1"/>
</dbReference>
<dbReference type="PANTHER" id="PTHR22957">
    <property type="entry name" value="TBC1 DOMAIN FAMILY MEMBER GTPASE-ACTIVATING PROTEIN"/>
    <property type="match status" value="1"/>
</dbReference>
<dbReference type="Pfam" id="PF12068">
    <property type="entry name" value="PH_RBD"/>
    <property type="match status" value="1"/>
</dbReference>
<dbReference type="Pfam" id="PF00566">
    <property type="entry name" value="RabGAP-TBC"/>
    <property type="match status" value="1"/>
</dbReference>
<dbReference type="SMART" id="SM00164">
    <property type="entry name" value="TBC"/>
    <property type="match status" value="1"/>
</dbReference>
<dbReference type="SUPFAM" id="SSF47923">
    <property type="entry name" value="Ypt/Rab-GAP domain of gyp1p"/>
    <property type="match status" value="2"/>
</dbReference>
<dbReference type="PROSITE" id="PS50086">
    <property type="entry name" value="TBC_RABGAP"/>
    <property type="match status" value="1"/>
</dbReference>